<sequence length="504" mass="56587">MKNEKRKTGIEPKVFFPPLIIVGILCWLTVRDLDAANVVINAVFSYVTNVWGWAFEWYMVVMLFGWFWLVFGPYAKKRLGNEPPEFSTASWIFMMFASCTSAAVLFWGSIEIYYYISTPPFGLEPNSTGAKELGLAYSLFHWGPLPWATYSFLSVAFAYFFFVRKMEVIRPSSTLVPLVGEKHAKGLFGTIVDNFYLVALIFAMGTSLGLATPLVTECMQWLFGIPHTLQLDAIIITCWIILNAICVACGLQKGVRIASDVRSYLSFLMLGWVFIVSGASFIMNYFTDSVGMLLMYLPRMLFYTDPIAKGGFPQGWTVFYWAWWVIYAIQMSIFLARISRGRTVRELCFGMVLGLTASTWILWTVLGSNTLLLIDKNIINIPNLIEQYGVARAIIETWAALPLSTATMWGFFILCFIATVTLVNACSYTLAMSTCREVRDGEEPPLLVRIGWSILVGIIGIVLLALGGLKPIQTAIIAGGCPLFFVNIMVTLSFIKDAKQNWKD</sequence>
<reference key="1">
    <citation type="journal article" date="2009" name="PLoS Genet.">
        <title>Organised genome dynamics in the Escherichia coli species results in highly diverse adaptive paths.</title>
        <authorList>
            <person name="Touchon M."/>
            <person name="Hoede C."/>
            <person name="Tenaillon O."/>
            <person name="Barbe V."/>
            <person name="Baeriswyl S."/>
            <person name="Bidet P."/>
            <person name="Bingen E."/>
            <person name="Bonacorsi S."/>
            <person name="Bouchier C."/>
            <person name="Bouvet O."/>
            <person name="Calteau A."/>
            <person name="Chiapello H."/>
            <person name="Clermont O."/>
            <person name="Cruveiller S."/>
            <person name="Danchin A."/>
            <person name="Diard M."/>
            <person name="Dossat C."/>
            <person name="Karoui M.E."/>
            <person name="Frapy E."/>
            <person name="Garry L."/>
            <person name="Ghigo J.M."/>
            <person name="Gilles A.M."/>
            <person name="Johnson J."/>
            <person name="Le Bouguenec C."/>
            <person name="Lescat M."/>
            <person name="Mangenot S."/>
            <person name="Martinez-Jehanne V."/>
            <person name="Matic I."/>
            <person name="Nassif X."/>
            <person name="Oztas S."/>
            <person name="Petit M.A."/>
            <person name="Pichon C."/>
            <person name="Rouy Z."/>
            <person name="Ruf C.S."/>
            <person name="Schneider D."/>
            <person name="Tourret J."/>
            <person name="Vacherie B."/>
            <person name="Vallenet D."/>
            <person name="Medigue C."/>
            <person name="Rocha E.P.C."/>
            <person name="Denamur E."/>
        </authorList>
    </citation>
    <scope>NUCLEOTIDE SEQUENCE [LARGE SCALE GENOMIC DNA]</scope>
    <source>
        <strain>UMN026 / ExPEC</strain>
    </source>
</reference>
<accession>B7N7R5</accession>
<name>CAIT_ECOLU</name>
<proteinExistence type="inferred from homology"/>
<keyword id="KW-0050">Antiport</keyword>
<keyword id="KW-0997">Cell inner membrane</keyword>
<keyword id="KW-1003">Cell membrane</keyword>
<keyword id="KW-0472">Membrane</keyword>
<keyword id="KW-0812">Transmembrane</keyword>
<keyword id="KW-1133">Transmembrane helix</keyword>
<keyword id="KW-0813">Transport</keyword>
<organism>
    <name type="scientific">Escherichia coli O17:K52:H18 (strain UMN026 / ExPEC)</name>
    <dbReference type="NCBI Taxonomy" id="585056"/>
    <lineage>
        <taxon>Bacteria</taxon>
        <taxon>Pseudomonadati</taxon>
        <taxon>Pseudomonadota</taxon>
        <taxon>Gammaproteobacteria</taxon>
        <taxon>Enterobacterales</taxon>
        <taxon>Enterobacteriaceae</taxon>
        <taxon>Escherichia</taxon>
    </lineage>
</organism>
<comment type="function">
    <text evidence="1">Catalyzes the exchange of L-carnitine for gamma-butyrobetaine.</text>
</comment>
<comment type="catalytic activity">
    <reaction evidence="1">
        <text>4-(trimethylamino)butanoate(in) + (R)-carnitine(out) = 4-(trimethylamino)butanoate(out) + (R)-carnitine(in)</text>
        <dbReference type="Rhea" id="RHEA:29427"/>
        <dbReference type="ChEBI" id="CHEBI:16244"/>
        <dbReference type="ChEBI" id="CHEBI:16347"/>
    </reaction>
</comment>
<comment type="pathway">
    <text evidence="1">Amine and polyamine metabolism; carnitine metabolism.</text>
</comment>
<comment type="subunit">
    <text evidence="1">Homotrimer.</text>
</comment>
<comment type="subcellular location">
    <subcellularLocation>
        <location evidence="1">Cell inner membrane</location>
        <topology evidence="1">Multi-pass membrane protein</topology>
    </subcellularLocation>
</comment>
<comment type="similarity">
    <text evidence="1">Belongs to the BCCT transporter (TC 2.A.15) family. CaiT subfamily.</text>
</comment>
<feature type="chain" id="PRO_1000136233" description="L-carnitine/gamma-butyrobetaine antiporter">
    <location>
        <begin position="1"/>
        <end position="504"/>
    </location>
</feature>
<feature type="transmembrane region" description="Helical" evidence="1">
    <location>
        <begin position="10"/>
        <end position="30"/>
    </location>
</feature>
<feature type="transmembrane region" description="Helical" evidence="1">
    <location>
        <begin position="51"/>
        <end position="71"/>
    </location>
</feature>
<feature type="transmembrane region" description="Helical" evidence="1">
    <location>
        <begin position="92"/>
        <end position="112"/>
    </location>
</feature>
<feature type="transmembrane region" description="Helical" evidence="1">
    <location>
        <begin position="143"/>
        <end position="163"/>
    </location>
</feature>
<feature type="transmembrane region" description="Helical" evidence="1">
    <location>
        <begin position="195"/>
        <end position="215"/>
    </location>
</feature>
<feature type="transmembrane region" description="Helical" evidence="1">
    <location>
        <begin position="231"/>
        <end position="251"/>
    </location>
</feature>
<feature type="transmembrane region" description="Helical" evidence="1">
    <location>
        <begin position="263"/>
        <end position="283"/>
    </location>
</feature>
<feature type="transmembrane region" description="Helical" evidence="1">
    <location>
        <begin position="316"/>
        <end position="336"/>
    </location>
</feature>
<feature type="transmembrane region" description="Helical" evidence="1">
    <location>
        <begin position="347"/>
        <end position="367"/>
    </location>
</feature>
<feature type="transmembrane region" description="Helical" evidence="1">
    <location>
        <begin position="398"/>
        <end position="418"/>
    </location>
</feature>
<feature type="transmembrane region" description="Helical" evidence="1">
    <location>
        <begin position="446"/>
        <end position="466"/>
    </location>
</feature>
<feature type="transmembrane region" description="Helical" evidence="1">
    <location>
        <begin position="475"/>
        <end position="495"/>
    </location>
</feature>
<gene>
    <name evidence="1" type="primary">caiT</name>
    <name type="ordered locus">ECUMN_0042</name>
</gene>
<evidence type="ECO:0000255" key="1">
    <source>
        <dbReference type="HAMAP-Rule" id="MF_01049"/>
    </source>
</evidence>
<protein>
    <recommendedName>
        <fullName evidence="1">L-carnitine/gamma-butyrobetaine antiporter</fullName>
    </recommendedName>
</protein>
<dbReference type="EMBL" id="CU928163">
    <property type="protein sequence ID" value="CAR11265.1"/>
    <property type="molecule type" value="Genomic_DNA"/>
</dbReference>
<dbReference type="RefSeq" id="WP_000787103.1">
    <property type="nucleotide sequence ID" value="NC_011751.1"/>
</dbReference>
<dbReference type="RefSeq" id="YP_002410820.1">
    <property type="nucleotide sequence ID" value="NC_011751.1"/>
</dbReference>
<dbReference type="SMR" id="B7N7R5"/>
<dbReference type="STRING" id="585056.ECUMN_0042"/>
<dbReference type="GeneID" id="93777395"/>
<dbReference type="KEGG" id="eum:ECUMN_0042"/>
<dbReference type="PATRIC" id="fig|585056.7.peg.227"/>
<dbReference type="HOGENOM" id="CLU_010118_6_0_6"/>
<dbReference type="UniPathway" id="UPA00117"/>
<dbReference type="Proteomes" id="UP000007097">
    <property type="component" value="Chromosome"/>
</dbReference>
<dbReference type="GO" id="GO:0005886">
    <property type="term" value="C:plasma membrane"/>
    <property type="evidence" value="ECO:0007669"/>
    <property type="project" value="UniProtKB-SubCell"/>
</dbReference>
<dbReference type="GO" id="GO:0044667">
    <property type="term" value="F:(R)-carnitine:4-(trimethylammonio)butanoate antiporter activity"/>
    <property type="evidence" value="ECO:0007669"/>
    <property type="project" value="UniProtKB-UniRule"/>
</dbReference>
<dbReference type="GO" id="GO:1900751">
    <property type="term" value="P:4-(trimethylammonio)butanoate transport"/>
    <property type="evidence" value="ECO:0007669"/>
    <property type="project" value="InterPro"/>
</dbReference>
<dbReference type="GO" id="GO:0009437">
    <property type="term" value="P:carnitine metabolic process"/>
    <property type="evidence" value="ECO:0007669"/>
    <property type="project" value="UniProtKB-UniRule"/>
</dbReference>
<dbReference type="HAMAP" id="MF_01049">
    <property type="entry name" value="CaiT"/>
    <property type="match status" value="1"/>
</dbReference>
<dbReference type="InterPro" id="IPR018093">
    <property type="entry name" value="BCCT_CS"/>
</dbReference>
<dbReference type="InterPro" id="IPR000060">
    <property type="entry name" value="BCCT_transptr"/>
</dbReference>
<dbReference type="InterPro" id="IPR023449">
    <property type="entry name" value="BCCT_transptr_CaiT"/>
</dbReference>
<dbReference type="NCBIfam" id="TIGR00842">
    <property type="entry name" value="bcct"/>
    <property type="match status" value="1"/>
</dbReference>
<dbReference type="NCBIfam" id="NF002887">
    <property type="entry name" value="PRK03356.1"/>
    <property type="match status" value="1"/>
</dbReference>
<dbReference type="PANTHER" id="PTHR30047">
    <property type="entry name" value="HIGH-AFFINITY CHOLINE TRANSPORT PROTEIN-RELATED"/>
    <property type="match status" value="1"/>
</dbReference>
<dbReference type="PANTHER" id="PTHR30047:SF11">
    <property type="entry name" value="L-CARNITINE_GAMMA-BUTYROBETAINE ANTIPORTER"/>
    <property type="match status" value="1"/>
</dbReference>
<dbReference type="Pfam" id="PF02028">
    <property type="entry name" value="BCCT"/>
    <property type="match status" value="1"/>
</dbReference>
<dbReference type="PROSITE" id="PS01303">
    <property type="entry name" value="BCCT"/>
    <property type="match status" value="1"/>
</dbReference>